<comment type="function">
    <text evidence="1">The RuvA-RuvB-RuvC complex processes Holliday junction (HJ) DNA during genetic recombination and DNA repair. Endonuclease that resolves HJ intermediates. Cleaves cruciform DNA by making single-stranded nicks across the HJ at symmetrical positions within the homologous arms, yielding a 5'-phosphate and a 3'-hydroxyl group; requires a central core of homology in the junction. The consensus cleavage sequence is 5'-(A/T)TT(C/G)-3'. Cleavage occurs on the 3'-side of the TT dinucleotide at the point of strand exchange. HJ branch migration catalyzed by RuvA-RuvB allows RuvC to scan DNA until it finds its consensus sequence, where it cleaves and resolves the cruciform DNA.</text>
</comment>
<comment type="catalytic activity">
    <reaction evidence="1">
        <text>Endonucleolytic cleavage at a junction such as a reciprocal single-stranded crossover between two homologous DNA duplexes (Holliday junction).</text>
        <dbReference type="EC" id="3.1.21.10"/>
    </reaction>
</comment>
<comment type="cofactor">
    <cofactor evidence="1">
        <name>Mg(2+)</name>
        <dbReference type="ChEBI" id="CHEBI:18420"/>
    </cofactor>
    <text evidence="1">Binds 2 Mg(2+) ion per subunit.</text>
</comment>
<comment type="subunit">
    <text evidence="1">Homodimer which binds Holliday junction (HJ) DNA. The HJ becomes 2-fold symmetrical on binding to RuvC with unstacked arms; it has a different conformation from HJ DNA in complex with RuvA. In the full resolvosome a probable DNA-RuvA(4)-RuvB(12)-RuvC(2) complex forms which resolves the HJ.</text>
</comment>
<comment type="subcellular location">
    <subcellularLocation>
        <location evidence="1">Cytoplasm</location>
    </subcellularLocation>
</comment>
<comment type="similarity">
    <text evidence="1">Belongs to the RuvC family.</text>
</comment>
<proteinExistence type="inferred from homology"/>
<reference key="1">
    <citation type="submission" date="2006-12" db="EMBL/GenBank/DDBJ databases">
        <title>Complete sequence of Shewanella amazonensis SB2B.</title>
        <authorList>
            <consortium name="US DOE Joint Genome Institute"/>
            <person name="Copeland A."/>
            <person name="Lucas S."/>
            <person name="Lapidus A."/>
            <person name="Barry K."/>
            <person name="Detter J.C."/>
            <person name="Glavina del Rio T."/>
            <person name="Hammon N."/>
            <person name="Israni S."/>
            <person name="Dalin E."/>
            <person name="Tice H."/>
            <person name="Pitluck S."/>
            <person name="Munk A.C."/>
            <person name="Brettin T."/>
            <person name="Bruce D."/>
            <person name="Han C."/>
            <person name="Tapia R."/>
            <person name="Gilna P."/>
            <person name="Schmutz J."/>
            <person name="Larimer F."/>
            <person name="Land M."/>
            <person name="Hauser L."/>
            <person name="Kyrpides N."/>
            <person name="Mikhailova N."/>
            <person name="Fredrickson J."/>
            <person name="Richardson P."/>
        </authorList>
    </citation>
    <scope>NUCLEOTIDE SEQUENCE [LARGE SCALE GENOMIC DNA]</scope>
    <source>
        <strain>ATCC BAA-1098 / SB2B</strain>
    </source>
</reference>
<protein>
    <recommendedName>
        <fullName evidence="1">Crossover junction endodeoxyribonuclease RuvC</fullName>
        <ecNumber evidence="1">3.1.21.10</ecNumber>
    </recommendedName>
    <alternativeName>
        <fullName evidence="1">Holliday junction nuclease RuvC</fullName>
    </alternativeName>
    <alternativeName>
        <fullName evidence="1">Holliday junction resolvase RuvC</fullName>
    </alternativeName>
</protein>
<organism>
    <name type="scientific">Shewanella amazonensis (strain ATCC BAA-1098 / SB2B)</name>
    <dbReference type="NCBI Taxonomy" id="326297"/>
    <lineage>
        <taxon>Bacteria</taxon>
        <taxon>Pseudomonadati</taxon>
        <taxon>Pseudomonadota</taxon>
        <taxon>Gammaproteobacteria</taxon>
        <taxon>Alteromonadales</taxon>
        <taxon>Shewanellaceae</taxon>
        <taxon>Shewanella</taxon>
    </lineage>
</organism>
<accession>A1S6P0</accession>
<keyword id="KW-0963">Cytoplasm</keyword>
<keyword id="KW-0227">DNA damage</keyword>
<keyword id="KW-0233">DNA recombination</keyword>
<keyword id="KW-0234">DNA repair</keyword>
<keyword id="KW-0238">DNA-binding</keyword>
<keyword id="KW-0255">Endonuclease</keyword>
<keyword id="KW-0378">Hydrolase</keyword>
<keyword id="KW-0460">Magnesium</keyword>
<keyword id="KW-0479">Metal-binding</keyword>
<keyword id="KW-0540">Nuclease</keyword>
<keyword id="KW-1185">Reference proteome</keyword>
<gene>
    <name evidence="1" type="primary">ruvC</name>
    <name type="ordered locus">Sama_1841</name>
</gene>
<feature type="chain" id="PRO_1000002825" description="Crossover junction endodeoxyribonuclease RuvC">
    <location>
        <begin position="1"/>
        <end position="173"/>
    </location>
</feature>
<feature type="active site" evidence="1">
    <location>
        <position position="8"/>
    </location>
</feature>
<feature type="active site" evidence="1">
    <location>
        <position position="67"/>
    </location>
</feature>
<feature type="active site" evidence="1">
    <location>
        <position position="139"/>
    </location>
</feature>
<feature type="binding site" evidence="1">
    <location>
        <position position="8"/>
    </location>
    <ligand>
        <name>Mg(2+)</name>
        <dbReference type="ChEBI" id="CHEBI:18420"/>
        <label>1</label>
    </ligand>
</feature>
<feature type="binding site" evidence="1">
    <location>
        <position position="67"/>
    </location>
    <ligand>
        <name>Mg(2+)</name>
        <dbReference type="ChEBI" id="CHEBI:18420"/>
        <label>2</label>
    </ligand>
</feature>
<feature type="binding site" evidence="1">
    <location>
        <position position="139"/>
    </location>
    <ligand>
        <name>Mg(2+)</name>
        <dbReference type="ChEBI" id="CHEBI:18420"/>
        <label>1</label>
    </ligand>
</feature>
<evidence type="ECO:0000255" key="1">
    <source>
        <dbReference type="HAMAP-Rule" id="MF_00034"/>
    </source>
</evidence>
<dbReference type="EC" id="3.1.21.10" evidence="1"/>
<dbReference type="EMBL" id="CP000507">
    <property type="protein sequence ID" value="ABM00047.1"/>
    <property type="molecule type" value="Genomic_DNA"/>
</dbReference>
<dbReference type="RefSeq" id="WP_011759954.1">
    <property type="nucleotide sequence ID" value="NC_008700.1"/>
</dbReference>
<dbReference type="SMR" id="A1S6P0"/>
<dbReference type="STRING" id="326297.Sama_1841"/>
<dbReference type="KEGG" id="saz:Sama_1841"/>
<dbReference type="eggNOG" id="COG0817">
    <property type="taxonomic scope" value="Bacteria"/>
</dbReference>
<dbReference type="HOGENOM" id="CLU_091257_2_1_6"/>
<dbReference type="OrthoDB" id="9805499at2"/>
<dbReference type="Proteomes" id="UP000009175">
    <property type="component" value="Chromosome"/>
</dbReference>
<dbReference type="GO" id="GO:0005737">
    <property type="term" value="C:cytoplasm"/>
    <property type="evidence" value="ECO:0007669"/>
    <property type="project" value="UniProtKB-SubCell"/>
</dbReference>
<dbReference type="GO" id="GO:0048476">
    <property type="term" value="C:Holliday junction resolvase complex"/>
    <property type="evidence" value="ECO:0007669"/>
    <property type="project" value="UniProtKB-UniRule"/>
</dbReference>
<dbReference type="GO" id="GO:0008821">
    <property type="term" value="F:crossover junction DNA endonuclease activity"/>
    <property type="evidence" value="ECO:0007669"/>
    <property type="project" value="UniProtKB-UniRule"/>
</dbReference>
<dbReference type="GO" id="GO:0003677">
    <property type="term" value="F:DNA binding"/>
    <property type="evidence" value="ECO:0007669"/>
    <property type="project" value="UniProtKB-KW"/>
</dbReference>
<dbReference type="GO" id="GO:0000287">
    <property type="term" value="F:magnesium ion binding"/>
    <property type="evidence" value="ECO:0007669"/>
    <property type="project" value="UniProtKB-UniRule"/>
</dbReference>
<dbReference type="GO" id="GO:0006310">
    <property type="term" value="P:DNA recombination"/>
    <property type="evidence" value="ECO:0007669"/>
    <property type="project" value="UniProtKB-UniRule"/>
</dbReference>
<dbReference type="GO" id="GO:0006281">
    <property type="term" value="P:DNA repair"/>
    <property type="evidence" value="ECO:0007669"/>
    <property type="project" value="UniProtKB-UniRule"/>
</dbReference>
<dbReference type="CDD" id="cd16962">
    <property type="entry name" value="RuvC"/>
    <property type="match status" value="1"/>
</dbReference>
<dbReference type="FunFam" id="3.30.420.10:FF:000002">
    <property type="entry name" value="Crossover junction endodeoxyribonuclease RuvC"/>
    <property type="match status" value="1"/>
</dbReference>
<dbReference type="Gene3D" id="3.30.420.10">
    <property type="entry name" value="Ribonuclease H-like superfamily/Ribonuclease H"/>
    <property type="match status" value="1"/>
</dbReference>
<dbReference type="HAMAP" id="MF_00034">
    <property type="entry name" value="RuvC"/>
    <property type="match status" value="1"/>
</dbReference>
<dbReference type="InterPro" id="IPR012337">
    <property type="entry name" value="RNaseH-like_sf"/>
</dbReference>
<dbReference type="InterPro" id="IPR036397">
    <property type="entry name" value="RNaseH_sf"/>
</dbReference>
<dbReference type="InterPro" id="IPR020563">
    <property type="entry name" value="X-over_junc_endoDNase_Mg_BS"/>
</dbReference>
<dbReference type="InterPro" id="IPR002176">
    <property type="entry name" value="X-over_junc_endoDNase_RuvC"/>
</dbReference>
<dbReference type="NCBIfam" id="NF000711">
    <property type="entry name" value="PRK00039.2-1"/>
    <property type="match status" value="1"/>
</dbReference>
<dbReference type="NCBIfam" id="TIGR00228">
    <property type="entry name" value="ruvC"/>
    <property type="match status" value="1"/>
</dbReference>
<dbReference type="PANTHER" id="PTHR30194">
    <property type="entry name" value="CROSSOVER JUNCTION ENDODEOXYRIBONUCLEASE RUVC"/>
    <property type="match status" value="1"/>
</dbReference>
<dbReference type="PANTHER" id="PTHR30194:SF3">
    <property type="entry name" value="CROSSOVER JUNCTION ENDODEOXYRIBONUCLEASE RUVC"/>
    <property type="match status" value="1"/>
</dbReference>
<dbReference type="Pfam" id="PF02075">
    <property type="entry name" value="RuvC"/>
    <property type="match status" value="1"/>
</dbReference>
<dbReference type="PRINTS" id="PR00696">
    <property type="entry name" value="RSOLVASERUVC"/>
</dbReference>
<dbReference type="SUPFAM" id="SSF53098">
    <property type="entry name" value="Ribonuclease H-like"/>
    <property type="match status" value="1"/>
</dbReference>
<dbReference type="PROSITE" id="PS01321">
    <property type="entry name" value="RUVC"/>
    <property type="match status" value="1"/>
</dbReference>
<sequence length="173" mass="18577">MAIILGVDPGSRITGYGVIQCQGRHQLYLGSGCIRTSSDELPDRLKQIFDGLQEIIRQYQPSQFAIERVFMAKNADSALKLGQARGAAIVAATVAGLPVAEYSATQIKNAVVGTGRAQKAQVQHMVQQMLKLPAAPQADAADALAVAMCHYHTHQSLVALGGRASVRTYGRYR</sequence>
<name>RUVC_SHEAM</name>